<protein>
    <recommendedName>
        <fullName evidence="1">Cytochrome b6-f complex subunit 8</fullName>
    </recommendedName>
    <alternativeName>
        <fullName evidence="1">Cytochrome b6-f complex subunit PetN</fullName>
    </alternativeName>
    <alternativeName>
        <fullName evidence="1">Cytochrome b6-f complex subunit VIII</fullName>
    </alternativeName>
</protein>
<name>PETN_MANES</name>
<feature type="chain" id="PRO_0000355449" description="Cytochrome b6-f complex subunit 8">
    <location>
        <begin position="1"/>
        <end position="29"/>
    </location>
</feature>
<feature type="transmembrane region" description="Helical" evidence="1">
    <location>
        <begin position="3"/>
        <end position="23"/>
    </location>
</feature>
<sequence length="29" mass="3170">MDIVSLAWAALMVVFTFSLSLVVWGRSGL</sequence>
<keyword id="KW-0150">Chloroplast</keyword>
<keyword id="KW-0249">Electron transport</keyword>
<keyword id="KW-0472">Membrane</keyword>
<keyword id="KW-0602">Photosynthesis</keyword>
<keyword id="KW-0934">Plastid</keyword>
<keyword id="KW-0793">Thylakoid</keyword>
<keyword id="KW-0812">Transmembrane</keyword>
<keyword id="KW-1133">Transmembrane helix</keyword>
<keyword id="KW-0813">Transport</keyword>
<organism>
    <name type="scientific">Manihot esculenta</name>
    <name type="common">Cassava</name>
    <name type="synonym">Jatropha manihot</name>
    <dbReference type="NCBI Taxonomy" id="3983"/>
    <lineage>
        <taxon>Eukaryota</taxon>
        <taxon>Viridiplantae</taxon>
        <taxon>Streptophyta</taxon>
        <taxon>Embryophyta</taxon>
        <taxon>Tracheophyta</taxon>
        <taxon>Spermatophyta</taxon>
        <taxon>Magnoliopsida</taxon>
        <taxon>eudicotyledons</taxon>
        <taxon>Gunneridae</taxon>
        <taxon>Pentapetalae</taxon>
        <taxon>rosids</taxon>
        <taxon>fabids</taxon>
        <taxon>Malpighiales</taxon>
        <taxon>Euphorbiaceae</taxon>
        <taxon>Crotonoideae</taxon>
        <taxon>Manihoteae</taxon>
        <taxon>Manihot</taxon>
    </lineage>
</organism>
<comment type="function">
    <text evidence="1">Component of the cytochrome b6-f complex, which mediates electron transfer between photosystem II (PSII) and photosystem I (PSI), cyclic electron flow around PSI, and state transitions.</text>
</comment>
<comment type="subunit">
    <text evidence="1">The 4 large subunits of the cytochrome b6-f complex are cytochrome b6, subunit IV (17 kDa polypeptide, PetD), cytochrome f and the Rieske protein, while the 4 small subunits are PetG, PetL, PetM and PetN. The complex functions as a dimer.</text>
</comment>
<comment type="subcellular location">
    <subcellularLocation>
        <location evidence="1">Plastid</location>
        <location evidence="1">Chloroplast thylakoid membrane</location>
        <topology evidence="1">Single-pass membrane protein</topology>
    </subcellularLocation>
</comment>
<comment type="similarity">
    <text evidence="1">Belongs to the PetN family.</text>
</comment>
<gene>
    <name evidence="1" type="primary">petN</name>
</gene>
<reference key="1">
    <citation type="journal article" date="2008" name="Theor. Appl. Genet.">
        <title>The complete nucleotide sequence of the cassava (Manihot esculenta) chloroplast genome and the evolution of atpF in Malpighiales: RNA editing and multiple losses of a group II intron.</title>
        <authorList>
            <person name="Daniell H."/>
            <person name="Wurdack K.J."/>
            <person name="Kanagaraj A."/>
            <person name="Lee S.-B."/>
            <person name="Saski C."/>
            <person name="Jansen R.K."/>
        </authorList>
    </citation>
    <scope>NUCLEOTIDE SEQUENCE [LARGE SCALE GENOMIC DNA]</scope>
    <source>
        <strain>cv. TME3</strain>
    </source>
</reference>
<geneLocation type="chloroplast"/>
<proteinExistence type="inferred from homology"/>
<evidence type="ECO:0000255" key="1">
    <source>
        <dbReference type="HAMAP-Rule" id="MF_00395"/>
    </source>
</evidence>
<accession>B1NWE3</accession>
<dbReference type="EMBL" id="EU117376">
    <property type="protein sequence ID" value="ABV66147.1"/>
    <property type="molecule type" value="Genomic_DNA"/>
</dbReference>
<dbReference type="RefSeq" id="YP_001718430.1">
    <property type="nucleotide sequence ID" value="NC_010433.1"/>
</dbReference>
<dbReference type="SMR" id="B1NWE3"/>
<dbReference type="GeneID" id="5999991"/>
<dbReference type="KEGG" id="mesc:5999991"/>
<dbReference type="GO" id="GO:0009535">
    <property type="term" value="C:chloroplast thylakoid membrane"/>
    <property type="evidence" value="ECO:0007669"/>
    <property type="project" value="UniProtKB-SubCell"/>
</dbReference>
<dbReference type="GO" id="GO:0009512">
    <property type="term" value="C:cytochrome b6f complex"/>
    <property type="evidence" value="ECO:0007669"/>
    <property type="project" value="InterPro"/>
</dbReference>
<dbReference type="GO" id="GO:0045158">
    <property type="term" value="F:electron transporter, transferring electrons within cytochrome b6/f complex of photosystem II activity"/>
    <property type="evidence" value="ECO:0007669"/>
    <property type="project" value="InterPro"/>
</dbReference>
<dbReference type="GO" id="GO:0017004">
    <property type="term" value="P:cytochrome complex assembly"/>
    <property type="evidence" value="ECO:0007669"/>
    <property type="project" value="UniProtKB-UniRule"/>
</dbReference>
<dbReference type="GO" id="GO:0015979">
    <property type="term" value="P:photosynthesis"/>
    <property type="evidence" value="ECO:0007669"/>
    <property type="project" value="UniProtKB-KW"/>
</dbReference>
<dbReference type="HAMAP" id="MF_00395">
    <property type="entry name" value="Cytb6_f_PetN"/>
    <property type="match status" value="1"/>
</dbReference>
<dbReference type="InterPro" id="IPR036143">
    <property type="entry name" value="Cytochr_b6-f_cplx_su8_sf"/>
</dbReference>
<dbReference type="InterPro" id="IPR005497">
    <property type="entry name" value="Cytochrome_b6-f_cplx_su8"/>
</dbReference>
<dbReference type="Pfam" id="PF03742">
    <property type="entry name" value="PetN"/>
    <property type="match status" value="1"/>
</dbReference>
<dbReference type="SUPFAM" id="SSF103451">
    <property type="entry name" value="PetN subunit of the cytochrome b6f complex"/>
    <property type="match status" value="1"/>
</dbReference>